<dbReference type="EMBL" id="CP000961">
    <property type="protein sequence ID" value="ACA88467.1"/>
    <property type="molecule type" value="Genomic_DNA"/>
</dbReference>
<dbReference type="RefSeq" id="WP_012326795.1">
    <property type="nucleotide sequence ID" value="NC_010506.1"/>
</dbReference>
<dbReference type="SMR" id="B1KHY9"/>
<dbReference type="STRING" id="392500.Swoo_4211"/>
<dbReference type="KEGG" id="swd:Swoo_4211"/>
<dbReference type="eggNOG" id="COG2965">
    <property type="taxonomic scope" value="Bacteria"/>
</dbReference>
<dbReference type="HOGENOM" id="CLU_166075_0_0_6"/>
<dbReference type="Proteomes" id="UP000002168">
    <property type="component" value="Chromosome"/>
</dbReference>
<dbReference type="GO" id="GO:1990077">
    <property type="term" value="C:primosome complex"/>
    <property type="evidence" value="ECO:0007669"/>
    <property type="project" value="UniProtKB-KW"/>
</dbReference>
<dbReference type="GO" id="GO:0003697">
    <property type="term" value="F:single-stranded DNA binding"/>
    <property type="evidence" value="ECO:0007669"/>
    <property type="project" value="UniProtKB-UniRule"/>
</dbReference>
<dbReference type="GO" id="GO:0006269">
    <property type="term" value="P:DNA replication, synthesis of primer"/>
    <property type="evidence" value="ECO:0007669"/>
    <property type="project" value="UniProtKB-KW"/>
</dbReference>
<dbReference type="Gene3D" id="2.40.50.140">
    <property type="entry name" value="Nucleic acid-binding proteins"/>
    <property type="match status" value="1"/>
</dbReference>
<dbReference type="HAMAP" id="MF_00720">
    <property type="entry name" value="PriB"/>
    <property type="match status" value="1"/>
</dbReference>
<dbReference type="InterPro" id="IPR012340">
    <property type="entry name" value="NA-bd_OB-fold"/>
</dbReference>
<dbReference type="InterPro" id="IPR000424">
    <property type="entry name" value="Primosome_PriB/ssb"/>
</dbReference>
<dbReference type="InterPro" id="IPR023646">
    <property type="entry name" value="Prisomal_replication_PriB"/>
</dbReference>
<dbReference type="NCBIfam" id="TIGR04418">
    <property type="entry name" value="PriB_gamma"/>
    <property type="match status" value="1"/>
</dbReference>
<dbReference type="Pfam" id="PF22657">
    <property type="entry name" value="SSB_1"/>
    <property type="match status" value="1"/>
</dbReference>
<dbReference type="PIRSF" id="PIRSF003135">
    <property type="entry name" value="Primosomal_n"/>
    <property type="match status" value="1"/>
</dbReference>
<dbReference type="SUPFAM" id="SSF50249">
    <property type="entry name" value="Nucleic acid-binding proteins"/>
    <property type="match status" value="1"/>
</dbReference>
<dbReference type="PROSITE" id="PS50935">
    <property type="entry name" value="SSB"/>
    <property type="match status" value="1"/>
</dbReference>
<feature type="chain" id="PRO_1000132635" description="Replication restart protein PriB">
    <location>
        <begin position="1"/>
        <end position="101"/>
    </location>
</feature>
<feature type="domain" description="SSB" evidence="1">
    <location>
        <begin position="1"/>
        <end position="101"/>
    </location>
</feature>
<sequence>MATNHLVLSGTITRSRSFHSPSGIAHSVIMLEHKSQCYEAEMLRNVYCQMQVILSGERFESVTDKLKIGVDIEVQGFIALQQSRNGQNRLVLHAENVELKT</sequence>
<name>PRIB_SHEWM</name>
<keyword id="KW-0235">DNA replication</keyword>
<keyword id="KW-0238">DNA-binding</keyword>
<keyword id="KW-0639">Primosome</keyword>
<keyword id="KW-1185">Reference proteome</keyword>
<protein>
    <recommendedName>
        <fullName evidence="1">Replication restart protein PriB</fullName>
    </recommendedName>
</protein>
<proteinExistence type="inferred from homology"/>
<accession>B1KHY9</accession>
<comment type="function">
    <text evidence="1">Involved in the restart of stalled replication forks, which reloads the replicative helicase on sites other than the origin of replication; the PriA-PriB pathway is the major replication restart pathway. During primosome assembly it facilitates complex formation between PriA and DnaT on DNA; stabilizes PriA on DNA. Stimulates the DNA unwinding activity of PriA helicase.</text>
</comment>
<comment type="subunit">
    <text evidence="1">Homodimer. Interacts with PriA and DnaT. Component of the replication restart primosome. Primosome assembly occurs via a 'hand-off' mechanism. PriA binds to replication forks, subsequently PriB then DnaT bind; DnaT then displaces ssDNA to generate the helicase loading substrate.</text>
</comment>
<comment type="similarity">
    <text evidence="1">Belongs to the PriB family.</text>
</comment>
<reference key="1">
    <citation type="submission" date="2008-02" db="EMBL/GenBank/DDBJ databases">
        <title>Complete sequence of Shewanella woodyi ATCC 51908.</title>
        <authorList>
            <consortium name="US DOE Joint Genome Institute"/>
            <person name="Copeland A."/>
            <person name="Lucas S."/>
            <person name="Lapidus A."/>
            <person name="Glavina del Rio T."/>
            <person name="Dalin E."/>
            <person name="Tice H."/>
            <person name="Bruce D."/>
            <person name="Goodwin L."/>
            <person name="Pitluck S."/>
            <person name="Sims D."/>
            <person name="Brettin T."/>
            <person name="Detter J.C."/>
            <person name="Han C."/>
            <person name="Kuske C.R."/>
            <person name="Schmutz J."/>
            <person name="Larimer F."/>
            <person name="Land M."/>
            <person name="Hauser L."/>
            <person name="Kyrpides N."/>
            <person name="Lykidis A."/>
            <person name="Zhao J.-S."/>
            <person name="Richardson P."/>
        </authorList>
    </citation>
    <scope>NUCLEOTIDE SEQUENCE [LARGE SCALE GENOMIC DNA]</scope>
    <source>
        <strain>ATCC 51908 / MS32</strain>
    </source>
</reference>
<organism>
    <name type="scientific">Shewanella woodyi (strain ATCC 51908 / MS32)</name>
    <dbReference type="NCBI Taxonomy" id="392500"/>
    <lineage>
        <taxon>Bacteria</taxon>
        <taxon>Pseudomonadati</taxon>
        <taxon>Pseudomonadota</taxon>
        <taxon>Gammaproteobacteria</taxon>
        <taxon>Alteromonadales</taxon>
        <taxon>Shewanellaceae</taxon>
        <taxon>Shewanella</taxon>
    </lineage>
</organism>
<evidence type="ECO:0000255" key="1">
    <source>
        <dbReference type="HAMAP-Rule" id="MF_00720"/>
    </source>
</evidence>
<gene>
    <name evidence="1" type="primary">priB</name>
    <name type="ordered locus">Swoo_4211</name>
</gene>